<accession>Q56694</accession>
<keyword id="KW-0002">3D-structure</keyword>
<keyword id="KW-0903">Direct protein sequencing</keyword>
<keyword id="KW-0521">NADP</keyword>
<keyword id="KW-0560">Oxidoreductase</keyword>
<comment type="function">
    <text>Catalyzes the oxidation of long-chain aliphatic aldehydes to acids. May be implicated in controlling luminescence as it catalyzes the oxidation of the fatty aldehyde substrate for the light-emitting reaction.</text>
</comment>
<comment type="catalytic activity">
    <reaction>
        <text>an aldehyde + NADP(+) + H2O = a carboxylate + NADPH + 2 H(+)</text>
        <dbReference type="Rhea" id="RHEA:11888"/>
        <dbReference type="ChEBI" id="CHEBI:15377"/>
        <dbReference type="ChEBI" id="CHEBI:15378"/>
        <dbReference type="ChEBI" id="CHEBI:17478"/>
        <dbReference type="ChEBI" id="CHEBI:29067"/>
        <dbReference type="ChEBI" id="CHEBI:57783"/>
        <dbReference type="ChEBI" id="CHEBI:58349"/>
        <dbReference type="EC" id="1.2.1.4"/>
    </reaction>
</comment>
<comment type="subunit">
    <text>Homodimer.</text>
</comment>
<comment type="similarity">
    <text evidence="1">Belongs to the aldehyde dehydrogenase family.</text>
</comment>
<evidence type="ECO:0000305" key="1"/>
<evidence type="ECO:0007829" key="2">
    <source>
        <dbReference type="PDB" id="1EYY"/>
    </source>
</evidence>
<evidence type="ECO:0007829" key="3">
    <source>
        <dbReference type="PDB" id="1EZ0"/>
    </source>
</evidence>
<name>ALDH_VIBHA</name>
<proteinExistence type="evidence at protein level"/>
<protein>
    <recommendedName>
        <fullName>NADP-dependent fatty aldehyde dehydrogenase</fullName>
        <ecNumber>1.2.1.4</ecNumber>
    </recommendedName>
</protein>
<sequence>MNPQTDNVFYATNAFTGEALPLAFPVHTEVEVNQAATAAAKVARDFRRLNNSKRASLLRTIASELEARSDDIIARAHLETALPEVRLTGEIARTANQLRLFADVVNSGSYHQAILDTPNPTRAPLPKPDIRRQQIALGPVAVFGASNFPLAFSAAGGDTASALAAGCPVIVKGHTAHPGTSQIVAECIEQALKQEQLPQAIFTLLQGNQRALGQALVSHPEIKAVGFTGSVGGGRALFNLAHERPEPIPFYGELGAINPTFIFPSAMRAKADLADQFVASMTMGCGQFCTKPGVVFALNTPETQAFIETAQSLIRQQSPSTLLTPGIRDSYQSQVVSRGSDDGIDVTFSQAESPCVASALFVTSSENWRKHPAWEEEIFGPQSLIVVCENVADMLSLSEMLAGSLTATIHATEEDYPQVSQLIPRLEEIAGRLVFNGWPTGVEVGYAMVHGGPYPASTHSASTSVGAEAIHRWLRPVAYQALPESLLPDSLKAENPLEIARAVDGKAAHS</sequence>
<gene>
    <name type="primary">aldH</name>
</gene>
<feature type="chain" id="PRO_0000056466" description="NADP-dependent fatty aldehyde dehydrogenase">
    <location>
        <begin position="1"/>
        <end position="510"/>
    </location>
</feature>
<feature type="active site">
    <location>
        <position position="253"/>
    </location>
</feature>
<feature type="active site">
    <location>
        <position position="289"/>
    </location>
</feature>
<feature type="binding site">
    <location>
        <begin position="229"/>
        <end position="234"/>
    </location>
    <ligand>
        <name>NADP(+)</name>
        <dbReference type="ChEBI" id="CHEBI:58349"/>
    </ligand>
</feature>
<feature type="strand" evidence="2">
    <location>
        <begin position="8"/>
        <end position="12"/>
    </location>
</feature>
<feature type="turn" evidence="3">
    <location>
        <begin position="14"/>
        <end position="16"/>
    </location>
</feature>
<feature type="strand" evidence="3">
    <location>
        <begin position="17"/>
        <end position="19"/>
    </location>
</feature>
<feature type="helix" evidence="3">
    <location>
        <begin position="29"/>
        <end position="48"/>
    </location>
</feature>
<feature type="helix" evidence="3">
    <location>
        <begin position="51"/>
        <end position="67"/>
    </location>
</feature>
<feature type="helix" evidence="3">
    <location>
        <begin position="69"/>
        <end position="80"/>
    </location>
</feature>
<feature type="helix" evidence="3">
    <location>
        <begin position="84"/>
        <end position="107"/>
    </location>
</feature>
<feature type="helix" evidence="3">
    <location>
        <begin position="109"/>
        <end position="111"/>
    </location>
</feature>
<feature type="strand" evidence="3">
    <location>
        <begin position="113"/>
        <end position="116"/>
    </location>
</feature>
<feature type="strand" evidence="3">
    <location>
        <begin position="123"/>
        <end position="125"/>
    </location>
</feature>
<feature type="strand" evidence="3">
    <location>
        <begin position="130"/>
        <end position="136"/>
    </location>
</feature>
<feature type="strand" evidence="3">
    <location>
        <begin position="140"/>
        <end position="143"/>
    </location>
</feature>
<feature type="strand" evidence="2">
    <location>
        <begin position="146"/>
        <end position="148"/>
    </location>
</feature>
<feature type="turn" evidence="3">
    <location>
        <begin position="149"/>
        <end position="152"/>
    </location>
</feature>
<feature type="helix" evidence="3">
    <location>
        <begin position="157"/>
        <end position="165"/>
    </location>
</feature>
<feature type="strand" evidence="3">
    <location>
        <begin position="169"/>
        <end position="172"/>
    </location>
</feature>
<feature type="helix" evidence="3">
    <location>
        <begin position="178"/>
        <end position="195"/>
    </location>
</feature>
<feature type="helix" evidence="3">
    <location>
        <begin position="199"/>
        <end position="201"/>
    </location>
</feature>
<feature type="strand" evidence="3">
    <location>
        <begin position="202"/>
        <end position="205"/>
    </location>
</feature>
<feature type="helix" evidence="3">
    <location>
        <begin position="211"/>
        <end position="218"/>
    </location>
</feature>
<feature type="strand" evidence="3">
    <location>
        <begin position="224"/>
        <end position="229"/>
    </location>
</feature>
<feature type="helix" evidence="3">
    <location>
        <begin position="231"/>
        <end position="243"/>
    </location>
</feature>
<feature type="strand" evidence="3">
    <location>
        <begin position="244"/>
        <end position="246"/>
    </location>
</feature>
<feature type="strand" evidence="3">
    <location>
        <begin position="250"/>
        <end position="253"/>
    </location>
</feature>
<feature type="strand" evidence="3">
    <location>
        <begin position="259"/>
        <end position="262"/>
    </location>
</feature>
<feature type="helix" evidence="3">
    <location>
        <begin position="264"/>
        <end position="269"/>
    </location>
</feature>
<feature type="helix" evidence="3">
    <location>
        <begin position="273"/>
        <end position="281"/>
    </location>
</feature>
<feature type="helix" evidence="3">
    <location>
        <begin position="283"/>
        <end position="286"/>
    </location>
</feature>
<feature type="strand" evidence="3">
    <location>
        <begin position="294"/>
        <end position="300"/>
    </location>
</feature>
<feature type="helix" evidence="3">
    <location>
        <begin position="301"/>
        <end position="316"/>
    </location>
</feature>
<feature type="helix" evidence="3">
    <location>
        <begin position="325"/>
        <end position="339"/>
    </location>
</feature>
<feature type="strand" evidence="3">
    <location>
        <begin position="344"/>
        <end position="348"/>
    </location>
</feature>
<feature type="strand" evidence="3">
    <location>
        <begin position="359"/>
        <end position="364"/>
    </location>
</feature>
<feature type="helix" evidence="3">
    <location>
        <begin position="365"/>
        <end position="370"/>
    </location>
</feature>
<feature type="helix" evidence="3">
    <location>
        <begin position="372"/>
        <end position="375"/>
    </location>
</feature>
<feature type="strand" evidence="3">
    <location>
        <begin position="380"/>
        <end position="390"/>
    </location>
</feature>
<feature type="helix" evidence="3">
    <location>
        <begin position="391"/>
        <end position="399"/>
    </location>
</feature>
<feature type="strand" evidence="3">
    <location>
        <begin position="404"/>
        <end position="410"/>
    </location>
</feature>
<feature type="helix" evidence="3">
    <location>
        <begin position="413"/>
        <end position="415"/>
    </location>
</feature>
<feature type="helix" evidence="3">
    <location>
        <begin position="416"/>
        <end position="427"/>
    </location>
</feature>
<feature type="strand" evidence="3">
    <location>
        <begin position="430"/>
        <end position="437"/>
    </location>
</feature>
<feature type="strand" evidence="3">
    <location>
        <begin position="445"/>
        <end position="447"/>
    </location>
</feature>
<feature type="strand" evidence="2">
    <location>
        <begin position="460"/>
        <end position="462"/>
    </location>
</feature>
<feature type="strand" evidence="3">
    <location>
        <begin position="464"/>
        <end position="466"/>
    </location>
</feature>
<feature type="helix" evidence="3">
    <location>
        <begin position="467"/>
        <end position="473"/>
    </location>
</feature>
<feature type="strand" evidence="3">
    <location>
        <begin position="474"/>
        <end position="481"/>
    </location>
</feature>
<feature type="helix" evidence="3">
    <location>
        <begin position="484"/>
        <end position="486"/>
    </location>
</feature>
<feature type="helix" evidence="3">
    <location>
        <begin position="489"/>
        <end position="491"/>
    </location>
</feature>
<feature type="strand" evidence="3">
    <location>
        <begin position="501"/>
        <end position="503"/>
    </location>
</feature>
<dbReference type="EC" id="1.2.1.4"/>
<dbReference type="EMBL" id="U39638">
    <property type="protein sequence ID" value="AAA89078.1"/>
    <property type="molecule type" value="Genomic_DNA"/>
</dbReference>
<dbReference type="PDB" id="1EYY">
    <property type="method" value="X-ray"/>
    <property type="resolution" value="2.50 A"/>
    <property type="chains" value="A/B/C/D=1-510"/>
</dbReference>
<dbReference type="PDB" id="1EZ0">
    <property type="method" value="X-ray"/>
    <property type="resolution" value="2.10 A"/>
    <property type="chains" value="A/B/C/D=1-510"/>
</dbReference>
<dbReference type="PDBsum" id="1EYY"/>
<dbReference type="PDBsum" id="1EZ0"/>
<dbReference type="SMR" id="Q56694"/>
<dbReference type="STRING" id="669.AL538_01810"/>
<dbReference type="DrugBank" id="DB03461">
    <property type="generic name" value="Nicotinamide adenine dinucleotide phosphate"/>
</dbReference>
<dbReference type="EvolutionaryTrace" id="Q56694"/>
<dbReference type="GO" id="GO:0033721">
    <property type="term" value="F:aldehyde dehydrogenase (NADP+) activity"/>
    <property type="evidence" value="ECO:0007669"/>
    <property type="project" value="UniProtKB-EC"/>
</dbReference>
<dbReference type="CDD" id="cd07129">
    <property type="entry name" value="ALDH_KGSADH"/>
    <property type="match status" value="1"/>
</dbReference>
<dbReference type="Gene3D" id="3.40.605.10">
    <property type="entry name" value="Aldehyde Dehydrogenase, Chain A, domain 1"/>
    <property type="match status" value="1"/>
</dbReference>
<dbReference type="Gene3D" id="3.40.309.10">
    <property type="entry name" value="Aldehyde Dehydrogenase, Chain A, domain 2"/>
    <property type="match status" value="1"/>
</dbReference>
<dbReference type="InterPro" id="IPR016161">
    <property type="entry name" value="Ald_DH/histidinol_DH"/>
</dbReference>
<dbReference type="InterPro" id="IPR016163">
    <property type="entry name" value="Ald_DH_C"/>
</dbReference>
<dbReference type="InterPro" id="IPR016162">
    <property type="entry name" value="Ald_DH_N"/>
</dbReference>
<dbReference type="InterPro" id="IPR015590">
    <property type="entry name" value="Aldehyde_DH_dom"/>
</dbReference>
<dbReference type="InterPro" id="IPR050740">
    <property type="entry name" value="Aldehyde_DH_Superfamily"/>
</dbReference>
<dbReference type="InterPro" id="IPR044151">
    <property type="entry name" value="ALDH_KGSADH"/>
</dbReference>
<dbReference type="PANTHER" id="PTHR43353:SF3">
    <property type="entry name" value="ALDEHYDE DEHYDROGENASE-RELATED"/>
    <property type="match status" value="1"/>
</dbReference>
<dbReference type="PANTHER" id="PTHR43353">
    <property type="entry name" value="SUCCINATE-SEMIALDEHYDE DEHYDROGENASE, MITOCHONDRIAL"/>
    <property type="match status" value="1"/>
</dbReference>
<dbReference type="Pfam" id="PF00171">
    <property type="entry name" value="Aldedh"/>
    <property type="match status" value="1"/>
</dbReference>
<dbReference type="SUPFAM" id="SSF53720">
    <property type="entry name" value="ALDH-like"/>
    <property type="match status" value="1"/>
</dbReference>
<organism>
    <name type="scientific">Vibrio harveyi</name>
    <name type="common">Beneckea harveyi</name>
    <dbReference type="NCBI Taxonomy" id="669"/>
    <lineage>
        <taxon>Bacteria</taxon>
        <taxon>Pseudomonadati</taxon>
        <taxon>Pseudomonadota</taxon>
        <taxon>Gammaproteobacteria</taxon>
        <taxon>Vibrionales</taxon>
        <taxon>Vibrionaceae</taxon>
        <taxon>Vibrio</taxon>
    </lineage>
</organism>
<reference key="1">
    <citation type="journal article" date="1995" name="Biochemistry">
        <title>Involvement of cysteine 289 in the catalytic activity of an NADP(+)-specific fatty aldehyde dehydrogenase from Vibrio harveyi.</title>
        <authorList>
            <person name="Vedadi M."/>
            <person name="Szittner R."/>
            <person name="Smillie L."/>
            <person name="Meighen E."/>
        </authorList>
    </citation>
    <scope>NUCLEOTIDE SEQUENCE [GENOMIC DNA]</scope>
    <scope>PARTIAL PROTEIN SEQUENCE</scope>
    <scope>CHARACTERIZATION</scope>
    <source>
        <strain>ATCC 33843 / NCIMB 1871 / 392 / MAV</strain>
    </source>
</reference>
<reference key="2">
    <citation type="journal article" date="2000" name="Biochem. J.">
        <title>Crystal structure of the NADP+-dependent aldehyde dehydrogenase from Vibrio harveyi: structural implications for cofactor specificity and affinity.</title>
        <authorList>
            <person name="Ahvazi B."/>
            <person name="Coulombe R."/>
            <person name="Delarge M."/>
            <person name="Vedadi M."/>
            <person name="Zhang L."/>
            <person name="Meighen E."/>
            <person name="Vrielink A."/>
        </authorList>
    </citation>
    <scope>X-RAY CRYSTALLOGRAPHY (2.1 ANGSTROMS)</scope>
    <source>
        <strain>ATCC 33843 / NCIMB 1871 / 392 / MAV</strain>
    </source>
</reference>